<proteinExistence type="inferred from homology"/>
<organism>
    <name type="scientific">Pan troglodytes</name>
    <name type="common">Chimpanzee</name>
    <dbReference type="NCBI Taxonomy" id="9598"/>
    <lineage>
        <taxon>Eukaryota</taxon>
        <taxon>Metazoa</taxon>
        <taxon>Chordata</taxon>
        <taxon>Craniata</taxon>
        <taxon>Vertebrata</taxon>
        <taxon>Euteleostomi</taxon>
        <taxon>Mammalia</taxon>
        <taxon>Eutheria</taxon>
        <taxon>Euarchontoglires</taxon>
        <taxon>Primates</taxon>
        <taxon>Haplorrhini</taxon>
        <taxon>Catarrhini</taxon>
        <taxon>Hominidae</taxon>
        <taxon>Pan</taxon>
    </lineage>
</organism>
<feature type="initiator methionine" description="Removed" evidence="2">
    <location>
        <position position="1"/>
    </location>
</feature>
<feature type="chain" id="PRO_0000251829" description="NADH dehydrogenase [ubiquinone] 1 beta subcomplex subunit 3">
    <location>
        <begin position="2"/>
        <end position="98"/>
    </location>
</feature>
<feature type="transmembrane region" description="Helical" evidence="4">
    <location>
        <begin position="66"/>
        <end position="88"/>
    </location>
</feature>
<feature type="modified residue" description="N-acetylalanine" evidence="2">
    <location>
        <position position="2"/>
    </location>
</feature>
<feature type="modified residue" description="Pros-methylhistidine" evidence="1">
    <location>
        <position position="5"/>
    </location>
</feature>
<feature type="modified residue" description="Pros-methylhistidine" evidence="1">
    <location>
        <position position="7"/>
    </location>
</feature>
<feature type="modified residue" description="Pros-methylhistidine" evidence="1">
    <location>
        <position position="9"/>
    </location>
</feature>
<feature type="modified residue" description="N6-acetyllysine; alternate" evidence="3">
    <location>
        <position position="23"/>
    </location>
</feature>
<feature type="modified residue" description="N6-succinyllysine; alternate" evidence="3">
    <location>
        <position position="23"/>
    </location>
</feature>
<feature type="modified residue" description="N6-acetyllysine; alternate" evidence="3">
    <location>
        <position position="34"/>
    </location>
</feature>
<feature type="modified residue" description="N6-succinyllysine; alternate" evidence="3">
    <location>
        <position position="34"/>
    </location>
</feature>
<accession>Q0MQD2</accession>
<gene>
    <name type="primary">NDUFB3</name>
</gene>
<comment type="function">
    <text evidence="1">Accessory subunit of the mitochondrial membrane respiratory chain NADH dehydrogenase (Complex I), that is believed not to be involved in catalysis. Complex I functions in the transfer of electrons from NADH to the respiratory chain. The immediate electron acceptor for the enzyme is believed to be ubiquinone.</text>
</comment>
<comment type="subunit">
    <text evidence="1">Complex I is composed of 45 different subunits.</text>
</comment>
<comment type="subcellular location">
    <subcellularLocation>
        <location evidence="1">Mitochondrion inner membrane</location>
        <topology evidence="1">Single-pass membrane protein</topology>
        <orientation evidence="1">Matrix side</orientation>
    </subcellularLocation>
</comment>
<comment type="PTM">
    <text evidence="1">Methylation at His residues by METTL9 enhances complex I-mediated mitochondrial respiration.</text>
</comment>
<comment type="similarity">
    <text evidence="5">Belongs to the complex I NDUFB3 subunit family.</text>
</comment>
<keyword id="KW-0007">Acetylation</keyword>
<keyword id="KW-0249">Electron transport</keyword>
<keyword id="KW-0472">Membrane</keyword>
<keyword id="KW-0488">Methylation</keyword>
<keyword id="KW-0496">Mitochondrion</keyword>
<keyword id="KW-0999">Mitochondrion inner membrane</keyword>
<keyword id="KW-1185">Reference proteome</keyword>
<keyword id="KW-0679">Respiratory chain</keyword>
<keyword id="KW-0812">Transmembrane</keyword>
<keyword id="KW-1133">Transmembrane helix</keyword>
<keyword id="KW-0813">Transport</keyword>
<name>NDUB3_PANTR</name>
<dbReference type="EMBL" id="DQ885702">
    <property type="protein sequence ID" value="ABH12211.1"/>
    <property type="molecule type" value="mRNA"/>
</dbReference>
<dbReference type="RefSeq" id="NP_001070251.1">
    <property type="nucleotide sequence ID" value="NM_001076783.1"/>
</dbReference>
<dbReference type="RefSeq" id="XP_009441969.1">
    <property type="nucleotide sequence ID" value="XM_009443694.2"/>
</dbReference>
<dbReference type="RefSeq" id="XP_016804830.1">
    <property type="nucleotide sequence ID" value="XM_016949341.1"/>
</dbReference>
<dbReference type="RefSeq" id="XP_024210461.1">
    <property type="nucleotide sequence ID" value="XM_024354693.2"/>
</dbReference>
<dbReference type="SMR" id="Q0MQD2"/>
<dbReference type="FunCoup" id="Q0MQD2">
    <property type="interactions" value="557"/>
</dbReference>
<dbReference type="STRING" id="9598.ENSPTRP00000021865"/>
<dbReference type="PaxDb" id="9598-ENSPTRP00000021865"/>
<dbReference type="Ensembl" id="ENSPTRT00000023711.5">
    <property type="protein sequence ID" value="ENSPTRP00000021865.4"/>
    <property type="gene ID" value="ENSPTRG00000012797.5"/>
</dbReference>
<dbReference type="GeneID" id="459871"/>
<dbReference type="KEGG" id="ptr:459871"/>
<dbReference type="CTD" id="4709"/>
<dbReference type="VGNC" id="VGNC:6111">
    <property type="gene designation" value="NDUFB3"/>
</dbReference>
<dbReference type="eggNOG" id="KOG4631">
    <property type="taxonomic scope" value="Eukaryota"/>
</dbReference>
<dbReference type="GeneTree" id="ENSGT00390000010316"/>
<dbReference type="HOGENOM" id="CLU_160226_1_0_1"/>
<dbReference type="InParanoid" id="Q0MQD2"/>
<dbReference type="OMA" id="YMGGFAH"/>
<dbReference type="OrthoDB" id="15751at9604"/>
<dbReference type="TreeFam" id="TF319656"/>
<dbReference type="Proteomes" id="UP000002277">
    <property type="component" value="Chromosome 2B"/>
</dbReference>
<dbReference type="Bgee" id="ENSPTRG00000012797">
    <property type="expression patterns" value="Expressed in heart and 21 other cell types or tissues"/>
</dbReference>
<dbReference type="GO" id="GO:0005743">
    <property type="term" value="C:mitochondrial inner membrane"/>
    <property type="evidence" value="ECO:0007669"/>
    <property type="project" value="UniProtKB-SubCell"/>
</dbReference>
<dbReference type="GO" id="GO:0045271">
    <property type="term" value="C:respiratory chain complex I"/>
    <property type="evidence" value="ECO:0000250"/>
    <property type="project" value="UniProtKB"/>
</dbReference>
<dbReference type="GO" id="GO:0022900">
    <property type="term" value="P:electron transport chain"/>
    <property type="evidence" value="ECO:0007669"/>
    <property type="project" value="InterPro"/>
</dbReference>
<dbReference type="GO" id="GO:0032981">
    <property type="term" value="P:mitochondrial respiratory chain complex I assembly"/>
    <property type="evidence" value="ECO:0000318"/>
    <property type="project" value="GO_Central"/>
</dbReference>
<dbReference type="InterPro" id="IPR012576">
    <property type="entry name" value="NDUFB3"/>
</dbReference>
<dbReference type="PANTHER" id="PTHR15082:SF2">
    <property type="entry name" value="NADH DEHYDROGENASE [UBIQUINONE] 1 BETA SUBCOMPLEX SUBUNIT 3"/>
    <property type="match status" value="1"/>
</dbReference>
<dbReference type="PANTHER" id="PTHR15082">
    <property type="entry name" value="NADH-UBIQUINONE OXIDOREDUCTASE B12 SUBUNIT"/>
    <property type="match status" value="1"/>
</dbReference>
<dbReference type="Pfam" id="PF08122">
    <property type="entry name" value="NDUF_B12"/>
    <property type="match status" value="1"/>
</dbReference>
<sequence length="98" mass="11402">MAHEHGHEHGHHKMELPDYRQWKIEGTPLETIQKKLAAKGLRDPWGRNEAWRYMGGFAKSVSFSDVFFKGFKWGFAAFVVAVGAEYYLESLNKDKKHH</sequence>
<evidence type="ECO:0000250" key="1">
    <source>
        <dbReference type="UniProtKB" id="O43676"/>
    </source>
</evidence>
<evidence type="ECO:0000250" key="2">
    <source>
        <dbReference type="UniProtKB" id="Q02365"/>
    </source>
</evidence>
<evidence type="ECO:0000250" key="3">
    <source>
        <dbReference type="UniProtKB" id="Q9CQZ6"/>
    </source>
</evidence>
<evidence type="ECO:0000255" key="4"/>
<evidence type="ECO:0000305" key="5"/>
<protein>
    <recommendedName>
        <fullName>NADH dehydrogenase [ubiquinone] 1 beta subcomplex subunit 3</fullName>
    </recommendedName>
    <alternativeName>
        <fullName>Complex I-B12</fullName>
        <shortName>CI-B12</shortName>
    </alternativeName>
    <alternativeName>
        <fullName>NADH-ubiquinone oxidoreductase B12 subunit</fullName>
    </alternativeName>
</protein>
<reference key="1">
    <citation type="journal article" date="2006" name="Gene">
        <title>Adaptive selection of mitochondrial complex I subunits during primate radiation.</title>
        <authorList>
            <person name="Mishmar D."/>
            <person name="Ruiz-Pesini E."/>
            <person name="Mondragon-Palomino M."/>
            <person name="Procaccio V."/>
            <person name="Gaut B."/>
            <person name="Wallace D.C."/>
        </authorList>
    </citation>
    <scope>NUCLEOTIDE SEQUENCE [MRNA]</scope>
</reference>